<comment type="catalytic activity">
    <reaction>
        <text>a triacylglycerol + H2O = a diacylglycerol + a fatty acid + H(+)</text>
        <dbReference type="Rhea" id="RHEA:12044"/>
        <dbReference type="ChEBI" id="CHEBI:15377"/>
        <dbReference type="ChEBI" id="CHEBI:15378"/>
        <dbReference type="ChEBI" id="CHEBI:17855"/>
        <dbReference type="ChEBI" id="CHEBI:18035"/>
        <dbReference type="ChEBI" id="CHEBI:28868"/>
        <dbReference type="EC" id="3.1.1.3"/>
    </reaction>
</comment>
<comment type="subcellular location">
    <subcellularLocation>
        <location evidence="5 6">Secreted</location>
    </subcellularLocation>
</comment>
<comment type="induction">
    <text evidence="5 6">Less protein is secreted in a secA2 or a double secG/secY2 mutant (at protein level).</text>
</comment>
<comment type="similarity">
    <text evidence="7">Belongs to the AB hydrolase superfamily. Lipase family.</text>
</comment>
<proteinExistence type="evidence at protein level"/>
<gene>
    <name type="primary">lipA</name>
    <name type="ordered locus">SAOUHSC_03006</name>
</gene>
<feature type="signal peptide" evidence="2">
    <location>
        <begin position="1"/>
        <end position="34"/>
    </location>
</feature>
<feature type="propeptide" id="PRO_0000414596" evidence="1">
    <location>
        <begin position="35"/>
        <end position="290"/>
    </location>
</feature>
<feature type="chain" id="PRO_0000414597" description="Lipase 1">
    <location>
        <begin position="291"/>
        <end position="680"/>
    </location>
</feature>
<feature type="region of interest" description="Disordered" evidence="4">
    <location>
        <begin position="82"/>
        <end position="259"/>
    </location>
</feature>
<feature type="compositionally biased region" description="Basic and acidic residues" evidence="4">
    <location>
        <begin position="84"/>
        <end position="112"/>
    </location>
</feature>
<feature type="compositionally biased region" description="Polar residues" evidence="4">
    <location>
        <begin position="125"/>
        <end position="138"/>
    </location>
</feature>
<feature type="compositionally biased region" description="Low complexity" evidence="4">
    <location>
        <begin position="148"/>
        <end position="170"/>
    </location>
</feature>
<feature type="compositionally biased region" description="Polar residues" evidence="4">
    <location>
        <begin position="204"/>
        <end position="223"/>
    </location>
</feature>
<feature type="compositionally biased region" description="Basic and acidic residues" evidence="4">
    <location>
        <begin position="224"/>
        <end position="234"/>
    </location>
</feature>
<feature type="compositionally biased region" description="Polar residues" evidence="4">
    <location>
        <begin position="235"/>
        <end position="246"/>
    </location>
</feature>
<feature type="active site" description="Charge relay system" evidence="3">
    <location>
        <position position="408"/>
    </location>
</feature>
<feature type="active site" description="Charge relay system" evidence="3">
    <location>
        <position position="639"/>
    </location>
</feature>
<evidence type="ECO:0000250" key="1"/>
<evidence type="ECO:0000255" key="2"/>
<evidence type="ECO:0000255" key="3">
    <source>
        <dbReference type="PROSITE-ProRule" id="PRU10037"/>
    </source>
</evidence>
<evidence type="ECO:0000256" key="4">
    <source>
        <dbReference type="SAM" id="MobiDB-lite"/>
    </source>
</evidence>
<evidence type="ECO:0000269" key="5">
    <source>
    </source>
</evidence>
<evidence type="ECO:0000269" key="6">
    <source>
    </source>
</evidence>
<evidence type="ECO:0000305" key="7"/>
<sequence>MKSQNKYSIRKFSVGASSILIATLLFLSGGQAQAAEKQVNMGNSQEDTVTAQSIGDQQTRENANYQRENGVDEQQHTENLTKNLHNDKTISEENHRKTDDLNKDQLKDDKKSSLNNKNIQRDTTKNNNANPSDVNQGLEQAINDGKQSKVASQQQSKEADNSQDSNANNNLPSQSRIKEAPSLNKLDQTSQREIVNETEIEKVQPQQNNQANDKITNYNFNNEQEVKPQKDEKTLSVSDLKNNQKSPVEPTKDNDKKNGLNLLKSSAVATLPNKGTKELTAKAKDDQTNKVAKQGQYKNQDPIVLVHGFNGFTDDINPSVLAHYWGGNKMNIRQDLEENGYKAYEASISAFGSNYDRAVELYYYIKGGRVDYGAAHAAKYGHERYGKTYEGIYKDWKPGQKVHLVGHSMGGQTIRQLEELLRNGNREEIEYQKKHGGEISPLFKGNHDNMISSITTLGTPHNGTHASDLAGNEALVRQIVFDIGKMFGNKNSRVDFGLAQWGLKQKPNESYIDYVKRVKQSNLWKSKDNGFYDLTREGATDLNRKTSLNPNIVYKTYTGEATHKALNSDRQKADLNMFFPFVITGNLIGKATEKEWRENDGLVSVISSQHPFNQAYTKATDKIQKGIWQVTPTKHDWDHVDFVGQDSSDTVRTREELQDFWHHLADDLVKTEKLTDTKQA</sequence>
<reference key="1">
    <citation type="book" date="2006" name="Gram positive pathogens, 2nd edition">
        <title>The Staphylococcus aureus NCTC 8325 genome.</title>
        <editorList>
            <person name="Fischetti V."/>
            <person name="Novick R."/>
            <person name="Ferretti J."/>
            <person name="Portnoy D."/>
            <person name="Rood J."/>
        </editorList>
        <authorList>
            <person name="Gillaspy A.F."/>
            <person name="Worrell V."/>
            <person name="Orvis J."/>
            <person name="Roe B.A."/>
            <person name="Dyer D.W."/>
            <person name="Iandolo J.J."/>
        </authorList>
    </citation>
    <scope>NUCLEOTIDE SEQUENCE [LARGE SCALE GENOMIC DNA]</scope>
    <source>
        <strain>NCTC 8325 / PS 47</strain>
    </source>
</reference>
<reference key="2">
    <citation type="journal article" date="2008" name="J. Bacteriol.">
        <title>Characterization of the accessory Sec system of Staphylococcus aureus.</title>
        <authorList>
            <person name="Siboo I.R."/>
            <person name="Chaffin D.O."/>
            <person name="Rubens C.E."/>
            <person name="Sullam P.M."/>
        </authorList>
    </citation>
    <scope>IDENTIFICATION BY MASS SPECTROMETRY</scope>
    <scope>SUBCELLULAR LOCATION</scope>
    <scope>INDUCTION</scope>
    <source>
        <strain>ISP479C</strain>
    </source>
</reference>
<reference key="3">
    <citation type="journal article" date="2010" name="J. Bacteriol.">
        <title>Synthetic effects of secG and secY2 mutations on exoproteome biogenesis in Staphylococcus aureus.</title>
        <authorList>
            <person name="Sibbald M.J."/>
            <person name="Winter T."/>
            <person name="van der Kooi-Pol M.M."/>
            <person name="Buist G."/>
            <person name="Tsompanidou E."/>
            <person name="Bosma T."/>
            <person name="Schafer T."/>
            <person name="Ohlsen K."/>
            <person name="Hecker M."/>
            <person name="Antelmann H."/>
            <person name="Engelmann S."/>
            <person name="van Dijl J.M."/>
        </authorList>
    </citation>
    <scope>IDENTIFICATION BY MASS SPECTROMETRY</scope>
    <scope>SUBCELLULAR LOCATION</scope>
    <scope>INDUCTION</scope>
    <source>
        <strain>RN4220</strain>
    </source>
</reference>
<accession>Q2FUU5</accession>
<keyword id="KW-0378">Hydrolase</keyword>
<keyword id="KW-0442">Lipid degradation</keyword>
<keyword id="KW-0443">Lipid metabolism</keyword>
<keyword id="KW-1185">Reference proteome</keyword>
<keyword id="KW-0964">Secreted</keyword>
<keyword id="KW-0732">Signal</keyword>
<keyword id="KW-0865">Zymogen</keyword>
<name>LIP1_STAA8</name>
<organism>
    <name type="scientific">Staphylococcus aureus (strain NCTC 8325 / PS 47)</name>
    <dbReference type="NCBI Taxonomy" id="93061"/>
    <lineage>
        <taxon>Bacteria</taxon>
        <taxon>Bacillati</taxon>
        <taxon>Bacillota</taxon>
        <taxon>Bacilli</taxon>
        <taxon>Bacillales</taxon>
        <taxon>Staphylococcaceae</taxon>
        <taxon>Staphylococcus</taxon>
    </lineage>
</organism>
<protein>
    <recommendedName>
        <fullName>Lipase 1</fullName>
        <ecNumber>3.1.1.3</ecNumber>
    </recommendedName>
    <alternativeName>
        <fullName>Glycerol ester hydrolase 1</fullName>
    </alternativeName>
</protein>
<dbReference type="EC" id="3.1.1.3"/>
<dbReference type="EMBL" id="CP000253">
    <property type="protein sequence ID" value="ABD31993.1"/>
    <property type="molecule type" value="Genomic_DNA"/>
</dbReference>
<dbReference type="RefSeq" id="YP_501455.1">
    <property type="nucleotide sequence ID" value="NC_007795.1"/>
</dbReference>
<dbReference type="SMR" id="Q2FUU5"/>
<dbReference type="STRING" id="93061.SAOUHSC_03006"/>
<dbReference type="ESTHER" id="staau-LIP">
    <property type="family name" value="Bacterial_lip_FamI.6"/>
</dbReference>
<dbReference type="PaxDb" id="1280-SAXN108_2943"/>
<dbReference type="GeneID" id="3921488"/>
<dbReference type="KEGG" id="sao:SAOUHSC_03006"/>
<dbReference type="PATRIC" id="fig|93061.5.peg.2714"/>
<dbReference type="eggNOG" id="COG1075">
    <property type="taxonomic scope" value="Bacteria"/>
</dbReference>
<dbReference type="HOGENOM" id="CLU_023555_2_1_9"/>
<dbReference type="OrthoDB" id="2004167at2"/>
<dbReference type="Proteomes" id="UP000008816">
    <property type="component" value="Chromosome"/>
</dbReference>
<dbReference type="GO" id="GO:0005576">
    <property type="term" value="C:extracellular region"/>
    <property type="evidence" value="ECO:0007669"/>
    <property type="project" value="UniProtKB-SubCell"/>
</dbReference>
<dbReference type="GO" id="GO:0004806">
    <property type="term" value="F:triacylglycerol lipase activity"/>
    <property type="evidence" value="ECO:0007669"/>
    <property type="project" value="UniProtKB-EC"/>
</dbReference>
<dbReference type="GO" id="GO:0016042">
    <property type="term" value="P:lipid catabolic process"/>
    <property type="evidence" value="ECO:0007669"/>
    <property type="project" value="UniProtKB-KW"/>
</dbReference>
<dbReference type="Gene3D" id="3.40.50.1820">
    <property type="entry name" value="alpha/beta hydrolase"/>
    <property type="match status" value="1"/>
</dbReference>
<dbReference type="InterPro" id="IPR029058">
    <property type="entry name" value="AB_hydrolase_fold"/>
</dbReference>
<dbReference type="InterPro" id="IPR056304">
    <property type="entry name" value="Lip-like_C"/>
</dbReference>
<dbReference type="InterPro" id="IPR005877">
    <property type="entry name" value="YSIRK_signal_dom"/>
</dbReference>
<dbReference type="NCBIfam" id="NF047351">
    <property type="entry name" value="lipase_YSIRK_Sa"/>
    <property type="match status" value="1"/>
</dbReference>
<dbReference type="NCBIfam" id="TIGR01168">
    <property type="entry name" value="YSIRK_signal"/>
    <property type="match status" value="1"/>
</dbReference>
<dbReference type="PANTHER" id="PTHR34043">
    <property type="entry name" value="ALPHA/BETA-HYDROLASES SUPERFAMILY PROTEIN"/>
    <property type="match status" value="1"/>
</dbReference>
<dbReference type="PANTHER" id="PTHR34043:SF3">
    <property type="entry name" value="ALPHA_BETA-HYDROLASES SUPERFAMILY PROTEIN"/>
    <property type="match status" value="1"/>
</dbReference>
<dbReference type="Pfam" id="PF24708">
    <property type="entry name" value="Lip_C"/>
    <property type="match status" value="1"/>
</dbReference>
<dbReference type="Pfam" id="PF04650">
    <property type="entry name" value="YSIRK_signal"/>
    <property type="match status" value="1"/>
</dbReference>
<dbReference type="SUPFAM" id="SSF53474">
    <property type="entry name" value="alpha/beta-Hydrolases"/>
    <property type="match status" value="1"/>
</dbReference>
<dbReference type="PROSITE" id="PS00120">
    <property type="entry name" value="LIPASE_SER"/>
    <property type="match status" value="1"/>
</dbReference>